<organism>
    <name type="scientific">Monkeypox virus</name>
    <dbReference type="NCBI Taxonomy" id="10244"/>
    <lineage>
        <taxon>Viruses</taxon>
        <taxon>Varidnaviria</taxon>
        <taxon>Bamfordvirae</taxon>
        <taxon>Nucleocytoviricota</taxon>
        <taxon>Pokkesviricetes</taxon>
        <taxon>Chitovirales</taxon>
        <taxon>Poxviridae</taxon>
        <taxon>Chordopoxvirinae</taxon>
        <taxon>Orthopoxvirus</taxon>
    </lineage>
</organism>
<dbReference type="EMBL" id="MT903340">
    <property type="protein sequence ID" value="QNP12925.1"/>
    <property type="molecule type" value="Genomic_DNA"/>
</dbReference>
<dbReference type="RefSeq" id="NP_536482.1">
    <property type="nucleotide sequence ID" value="NC_003310.1"/>
</dbReference>
<dbReference type="RefSeq" id="YP_010377052.1">
    <property type="nucleotide sequence ID" value="NC_063383.1"/>
</dbReference>
<dbReference type="GeneID" id="72551464"/>
<dbReference type="GeneID" id="929005"/>
<dbReference type="KEGG" id="vg:929005"/>
<dbReference type="Proteomes" id="UP000516359">
    <property type="component" value="Genome"/>
</dbReference>
<dbReference type="GO" id="GO:0030430">
    <property type="term" value="C:host cell cytoplasm"/>
    <property type="evidence" value="ECO:0007669"/>
    <property type="project" value="UniProtKB-SubCell"/>
</dbReference>
<dbReference type="InterPro" id="IPR035345">
    <property type="entry name" value="E7R_orthopoxvir"/>
</dbReference>
<dbReference type="Pfam" id="PF17467">
    <property type="entry name" value="E7R"/>
    <property type="match status" value="1"/>
</dbReference>
<comment type="subcellular location">
    <subcellularLocation>
        <location evidence="1">Host cytoplasm</location>
    </subcellularLocation>
</comment>
<comment type="induction">
    <text evidence="1">Expressed in the intermediate phase of the viral replicative cycle.</text>
</comment>
<comment type="PTM">
    <text evidence="1">Myristoylated.</text>
</comment>
<comment type="similarity">
    <text evidence="2">Belongs to the orthopoxvirus OPG069 family.</text>
</comment>
<sequence length="166" mass="19628">METVATIQTPTKLMNKENAEMILEKIVNHIAMYISDESIYSENNPEYIDFRNRYGDYRSLIIKSDHEFVKLCKDHAEKSSPETQQMIIKHIYEQYLIPVSEVLLKPIMSMGDIFTYNGCKDNEWMLEQLSTLNFNNLYTWNSCSIGNVTRLFYTFFSYLMKDKLNI</sequence>
<feature type="chain" id="PRO_0000457698" description="Protein OPG069">
    <location>
        <begin position="1"/>
        <end position="166"/>
    </location>
</feature>
<evidence type="ECO:0000250" key="1">
    <source>
        <dbReference type="UniProtKB" id="P68446"/>
    </source>
</evidence>
<evidence type="ECO:0000305" key="2"/>
<name>PG069_MONPV</name>
<protein>
    <recommendedName>
        <fullName>Protein OPG069</fullName>
    </recommendedName>
</protein>
<accession>A0A7H0DN42</accession>
<keyword id="KW-1035">Host cytoplasm</keyword>
<keyword id="KW-0449">Lipoprotein</keyword>
<keyword id="KW-0519">Myristate</keyword>
<keyword id="KW-1185">Reference proteome</keyword>
<proteinExistence type="inferred from homology"/>
<gene>
    <name type="primary">OPG069</name>
    <name type="ORF">MPXVgp055</name>
</gene>
<organismHost>
    <name type="scientific">Cynomys gunnisoni</name>
    <name type="common">Gunnison's prairie dog</name>
    <name type="synonym">Spermophilus gunnisoni</name>
    <dbReference type="NCBI Taxonomy" id="45479"/>
</organismHost>
<organismHost>
    <name type="scientific">Cynomys leucurus</name>
    <name type="common">White-tailed prairie dog</name>
    <dbReference type="NCBI Taxonomy" id="99825"/>
</organismHost>
<organismHost>
    <name type="scientific">Cynomys ludovicianus</name>
    <name type="common">Black-tailed prairie dog</name>
    <dbReference type="NCBI Taxonomy" id="45480"/>
</organismHost>
<organismHost>
    <name type="scientific">Cynomys mexicanus</name>
    <name type="common">Mexican prairie dog</name>
    <dbReference type="NCBI Taxonomy" id="99826"/>
</organismHost>
<organismHost>
    <name type="scientific">Cynomys parvidens</name>
    <name type="common">Utah prairie dog</name>
    <dbReference type="NCBI Taxonomy" id="99827"/>
</organismHost>
<organismHost>
    <name type="scientific">Gliridae</name>
    <name type="common">dormice</name>
    <dbReference type="NCBI Taxonomy" id="30650"/>
</organismHost>
<organismHost>
    <name type="scientific">Heliosciurus ruwenzorii</name>
    <name type="common">Ruwenzori sun squirrel</name>
    <dbReference type="NCBI Taxonomy" id="226685"/>
</organismHost>
<organismHost>
    <name type="scientific">Homo sapiens</name>
    <name type="common">Human</name>
    <dbReference type="NCBI Taxonomy" id="9606"/>
</organismHost>
<organismHost>
    <name type="scientific">Mus musculus</name>
    <name type="common">Mouse</name>
    <dbReference type="NCBI Taxonomy" id="10090"/>
</organismHost>
<reference key="1">
    <citation type="journal article" date="2022" name="J. Infect. Dis.">
        <title>Exportation of Monkeypox virus from the African continent.</title>
        <authorList>
            <person name="Mauldin M.R."/>
            <person name="McCollum A.M."/>
            <person name="Nakazawa Y.J."/>
            <person name="Mandra A."/>
            <person name="Whitehouse E.R."/>
            <person name="Davidson W."/>
            <person name="Zhao H."/>
            <person name="Gao J."/>
            <person name="Li Y."/>
            <person name="Doty J."/>
            <person name="Yinka-Ogunleye A."/>
            <person name="Akinpelu A."/>
            <person name="Aruna O."/>
            <person name="Naidoo D."/>
            <person name="Lewandowski K."/>
            <person name="Afrough B."/>
            <person name="Graham V."/>
            <person name="Aarons E."/>
            <person name="Hewson R."/>
            <person name="Vipond R."/>
            <person name="Dunning J."/>
            <person name="Chand M."/>
            <person name="Brown C."/>
            <person name="Cohen-Gihon I."/>
            <person name="Erez N."/>
            <person name="Shifman O."/>
            <person name="Israeli O."/>
            <person name="Sharon M."/>
            <person name="Schwartz E."/>
            <person name="Beth-Din A."/>
            <person name="Zvi A."/>
            <person name="Mak T.M."/>
            <person name="Ng Y.K."/>
            <person name="Cui L."/>
            <person name="Lin R.T.P."/>
            <person name="Olson V.A."/>
            <person name="Brooks T."/>
            <person name="Paran N."/>
            <person name="Ihekweazu C."/>
            <person name="Reynolds M.G."/>
        </authorList>
    </citation>
    <scope>NUCLEOTIDE SEQUENCE [LARGE SCALE GENOMIC DNA]</scope>
    <source>
        <strain>MPXV-M5312_HM12_Rivers</strain>
    </source>
</reference>